<proteinExistence type="evidence at transcript level"/>
<reference key="1">
    <citation type="journal article" date="2000" name="Science">
        <title>The genome sequence of Drosophila melanogaster.</title>
        <authorList>
            <person name="Adams M.D."/>
            <person name="Celniker S.E."/>
            <person name="Holt R.A."/>
            <person name="Evans C.A."/>
            <person name="Gocayne J.D."/>
            <person name="Amanatides P.G."/>
            <person name="Scherer S.E."/>
            <person name="Li P.W."/>
            <person name="Hoskins R.A."/>
            <person name="Galle R.F."/>
            <person name="George R.A."/>
            <person name="Lewis S.E."/>
            <person name="Richards S."/>
            <person name="Ashburner M."/>
            <person name="Henderson S.N."/>
            <person name="Sutton G.G."/>
            <person name="Wortman J.R."/>
            <person name="Yandell M.D."/>
            <person name="Zhang Q."/>
            <person name="Chen L.X."/>
            <person name="Brandon R.C."/>
            <person name="Rogers Y.-H.C."/>
            <person name="Blazej R.G."/>
            <person name="Champe M."/>
            <person name="Pfeiffer B.D."/>
            <person name="Wan K.H."/>
            <person name="Doyle C."/>
            <person name="Baxter E.G."/>
            <person name="Helt G."/>
            <person name="Nelson C.R."/>
            <person name="Miklos G.L.G."/>
            <person name="Abril J.F."/>
            <person name="Agbayani A."/>
            <person name="An H.-J."/>
            <person name="Andrews-Pfannkoch C."/>
            <person name="Baldwin D."/>
            <person name="Ballew R.M."/>
            <person name="Basu A."/>
            <person name="Baxendale J."/>
            <person name="Bayraktaroglu L."/>
            <person name="Beasley E.M."/>
            <person name="Beeson K.Y."/>
            <person name="Benos P.V."/>
            <person name="Berman B.P."/>
            <person name="Bhandari D."/>
            <person name="Bolshakov S."/>
            <person name="Borkova D."/>
            <person name="Botchan M.R."/>
            <person name="Bouck J."/>
            <person name="Brokstein P."/>
            <person name="Brottier P."/>
            <person name="Burtis K.C."/>
            <person name="Busam D.A."/>
            <person name="Butler H."/>
            <person name="Cadieu E."/>
            <person name="Center A."/>
            <person name="Chandra I."/>
            <person name="Cherry J.M."/>
            <person name="Cawley S."/>
            <person name="Dahlke C."/>
            <person name="Davenport L.B."/>
            <person name="Davies P."/>
            <person name="de Pablos B."/>
            <person name="Delcher A."/>
            <person name="Deng Z."/>
            <person name="Mays A.D."/>
            <person name="Dew I."/>
            <person name="Dietz S.M."/>
            <person name="Dodson K."/>
            <person name="Doup L.E."/>
            <person name="Downes M."/>
            <person name="Dugan-Rocha S."/>
            <person name="Dunkov B.C."/>
            <person name="Dunn P."/>
            <person name="Durbin K.J."/>
            <person name="Evangelista C.C."/>
            <person name="Ferraz C."/>
            <person name="Ferriera S."/>
            <person name="Fleischmann W."/>
            <person name="Fosler C."/>
            <person name="Gabrielian A.E."/>
            <person name="Garg N.S."/>
            <person name="Gelbart W.M."/>
            <person name="Glasser K."/>
            <person name="Glodek A."/>
            <person name="Gong F."/>
            <person name="Gorrell J.H."/>
            <person name="Gu Z."/>
            <person name="Guan P."/>
            <person name="Harris M."/>
            <person name="Harris N.L."/>
            <person name="Harvey D.A."/>
            <person name="Heiman T.J."/>
            <person name="Hernandez J.R."/>
            <person name="Houck J."/>
            <person name="Hostin D."/>
            <person name="Houston K.A."/>
            <person name="Howland T.J."/>
            <person name="Wei M.-H."/>
            <person name="Ibegwam C."/>
            <person name="Jalali M."/>
            <person name="Kalush F."/>
            <person name="Karpen G.H."/>
            <person name="Ke Z."/>
            <person name="Kennison J.A."/>
            <person name="Ketchum K.A."/>
            <person name="Kimmel B.E."/>
            <person name="Kodira C.D."/>
            <person name="Kraft C.L."/>
            <person name="Kravitz S."/>
            <person name="Kulp D."/>
            <person name="Lai Z."/>
            <person name="Lasko P."/>
            <person name="Lei Y."/>
            <person name="Levitsky A.A."/>
            <person name="Li J.H."/>
            <person name="Li Z."/>
            <person name="Liang Y."/>
            <person name="Lin X."/>
            <person name="Liu X."/>
            <person name="Mattei B."/>
            <person name="McIntosh T.C."/>
            <person name="McLeod M.P."/>
            <person name="McPherson D."/>
            <person name="Merkulov G."/>
            <person name="Milshina N.V."/>
            <person name="Mobarry C."/>
            <person name="Morris J."/>
            <person name="Moshrefi A."/>
            <person name="Mount S.M."/>
            <person name="Moy M."/>
            <person name="Murphy B."/>
            <person name="Murphy L."/>
            <person name="Muzny D.M."/>
            <person name="Nelson D.L."/>
            <person name="Nelson D.R."/>
            <person name="Nelson K.A."/>
            <person name="Nixon K."/>
            <person name="Nusskern D.R."/>
            <person name="Pacleb J.M."/>
            <person name="Palazzolo M."/>
            <person name="Pittman G.S."/>
            <person name="Pan S."/>
            <person name="Pollard J."/>
            <person name="Puri V."/>
            <person name="Reese M.G."/>
            <person name="Reinert K."/>
            <person name="Remington K."/>
            <person name="Saunders R.D.C."/>
            <person name="Scheeler F."/>
            <person name="Shen H."/>
            <person name="Shue B.C."/>
            <person name="Siden-Kiamos I."/>
            <person name="Simpson M."/>
            <person name="Skupski M.P."/>
            <person name="Smith T.J."/>
            <person name="Spier E."/>
            <person name="Spradling A.C."/>
            <person name="Stapleton M."/>
            <person name="Strong R."/>
            <person name="Sun E."/>
            <person name="Svirskas R."/>
            <person name="Tector C."/>
            <person name="Turner R."/>
            <person name="Venter E."/>
            <person name="Wang A.H."/>
            <person name="Wang X."/>
            <person name="Wang Z.-Y."/>
            <person name="Wassarman D.A."/>
            <person name="Weinstock G.M."/>
            <person name="Weissenbach J."/>
            <person name="Williams S.M."/>
            <person name="Woodage T."/>
            <person name="Worley K.C."/>
            <person name="Wu D."/>
            <person name="Yang S."/>
            <person name="Yao Q.A."/>
            <person name="Ye J."/>
            <person name="Yeh R.-F."/>
            <person name="Zaveri J.S."/>
            <person name="Zhan M."/>
            <person name="Zhang G."/>
            <person name="Zhao Q."/>
            <person name="Zheng L."/>
            <person name="Zheng X.H."/>
            <person name="Zhong F.N."/>
            <person name="Zhong W."/>
            <person name="Zhou X."/>
            <person name="Zhu S.C."/>
            <person name="Zhu X."/>
            <person name="Smith H.O."/>
            <person name="Gibbs R.A."/>
            <person name="Myers E.W."/>
            <person name="Rubin G.M."/>
            <person name="Venter J.C."/>
        </authorList>
    </citation>
    <scope>NUCLEOTIDE SEQUENCE [LARGE SCALE GENOMIC DNA]</scope>
    <source>
        <strain>Berkeley</strain>
    </source>
</reference>
<reference key="2">
    <citation type="journal article" date="2002" name="Genome Biol.">
        <title>Annotation of the Drosophila melanogaster euchromatic genome: a systematic review.</title>
        <authorList>
            <person name="Misra S."/>
            <person name="Crosby M.A."/>
            <person name="Mungall C.J."/>
            <person name="Matthews B.B."/>
            <person name="Campbell K.S."/>
            <person name="Hradecky P."/>
            <person name="Huang Y."/>
            <person name="Kaminker J.S."/>
            <person name="Millburn G.H."/>
            <person name="Prochnik S.E."/>
            <person name="Smith C.D."/>
            <person name="Tupy J.L."/>
            <person name="Whitfield E.J."/>
            <person name="Bayraktaroglu L."/>
            <person name="Berman B.P."/>
            <person name="Bettencourt B.R."/>
            <person name="Celniker S.E."/>
            <person name="de Grey A.D.N.J."/>
            <person name="Drysdale R.A."/>
            <person name="Harris N.L."/>
            <person name="Richter J."/>
            <person name="Russo S."/>
            <person name="Schroeder A.J."/>
            <person name="Shu S.Q."/>
            <person name="Stapleton M."/>
            <person name="Yamada C."/>
            <person name="Ashburner M."/>
            <person name="Gelbart W.M."/>
            <person name="Rubin G.M."/>
            <person name="Lewis S.E."/>
        </authorList>
    </citation>
    <scope>GENOME REANNOTATION</scope>
    <source>
        <strain>Berkeley</strain>
    </source>
</reference>
<reference key="3">
    <citation type="journal article" date="2002" name="Genome Biol.">
        <title>A Drosophila full-length cDNA resource.</title>
        <authorList>
            <person name="Stapleton M."/>
            <person name="Carlson J.W."/>
            <person name="Brokstein P."/>
            <person name="Yu C."/>
            <person name="Champe M."/>
            <person name="George R.A."/>
            <person name="Guarin H."/>
            <person name="Kronmiller B."/>
            <person name="Pacleb J.M."/>
            <person name="Park S."/>
            <person name="Wan K.H."/>
            <person name="Rubin G.M."/>
            <person name="Celniker S.E."/>
        </authorList>
    </citation>
    <scope>NUCLEOTIDE SEQUENCE [LARGE SCALE MRNA]</scope>
    <source>
        <strain>Berkeley</strain>
        <tissue>Embryo</tissue>
    </source>
</reference>
<reference key="4">
    <citation type="journal article" date="2016" name="Mol. Cell">
        <title>PIWI slicing and EXD1 drive biogenesis of nuclear piRNAs from cytosolic targets of the mouse piRNA pathway.</title>
        <authorList>
            <person name="Yang Z."/>
            <person name="Chen K.M."/>
            <person name="Pandey R.R."/>
            <person name="Homolka D."/>
            <person name="Reuter M."/>
            <person name="Janeiro B.K."/>
            <person name="Sachidanandam R."/>
            <person name="Fauvarque M.O."/>
            <person name="McCarthy A.A."/>
            <person name="Pillai R.S."/>
        </authorList>
    </citation>
    <scope>DISRUPTION PHENOTYPE</scope>
    <scope>DOMAIN</scope>
</reference>
<comment type="function">
    <text evidence="1">RNA-binding protein. Inactive exonuclease.</text>
</comment>
<comment type="subunit">
    <text evidence="1">Homodimer (By similarity).</text>
</comment>
<comment type="domain">
    <text evidence="7">The 3'-5' exonuclease domain lacks the conserved Asp-Glu-Asp-Asp (DEDD) residues that coordinates divalent ions essential for exonuclease activity.</text>
</comment>
<comment type="disruption phenotype">
    <text evidence="4">No visible phenotype. Flies display normal fertility and do not show any transposon activation in the germline.</text>
</comment>
<comment type="similarity">
    <text evidence="6">Belongs to the EXD1 family.</text>
</comment>
<comment type="caution">
    <text evidence="7">It is unclear whether the protein is involved in the piRNA metabolic process. The absence of phenotypes in flies suggests that this function is not conserved.</text>
</comment>
<sequence>MNKSDGNESFALDSLPENIRYPFGKRELEILEKQLDRIVLIYQVDTTYHSALKDIKDQKIISLLVEPSFYGRHHPTSILVVATCNGTYIFDIKALGLIFLELAKILEADQPRKVIHYSHRIADHLLHRQRISLGGIFDTFVAVCLSSNTRIPYTLPEAISLVFGLPMEKVTGGCESQRNFTARPLTHSQMRYLAKLVQLQHIMHDHLNYSHIFCAEVYRISLEFSHSYYGLRSCDVAINMAPASSFGFQLLDSFCKKADKELEQI</sequence>
<accession>Q9VU31</accession>
<feature type="chain" id="PRO_0000435801" description="Protein Exd1 homolog">
    <location>
        <begin position="1"/>
        <end position="265"/>
    </location>
</feature>
<feature type="domain" description="3'-5' exonuclease" evidence="3">
    <location>
        <begin position="32"/>
        <end position="82"/>
    </location>
</feature>
<name>EXD1_DROME</name>
<keyword id="KW-1185">Reference proteome</keyword>
<keyword id="KW-0694">RNA-binding</keyword>
<organism>
    <name type="scientific">Drosophila melanogaster</name>
    <name type="common">Fruit fly</name>
    <dbReference type="NCBI Taxonomy" id="7227"/>
    <lineage>
        <taxon>Eukaryota</taxon>
        <taxon>Metazoa</taxon>
        <taxon>Ecdysozoa</taxon>
        <taxon>Arthropoda</taxon>
        <taxon>Hexapoda</taxon>
        <taxon>Insecta</taxon>
        <taxon>Pterygota</taxon>
        <taxon>Neoptera</taxon>
        <taxon>Endopterygota</taxon>
        <taxon>Diptera</taxon>
        <taxon>Brachycera</taxon>
        <taxon>Muscomorpha</taxon>
        <taxon>Ephydroidea</taxon>
        <taxon>Drosophilidae</taxon>
        <taxon>Drosophila</taxon>
        <taxon>Sophophora</taxon>
    </lineage>
</organism>
<dbReference type="EMBL" id="AE003539">
    <property type="protein sequence ID" value="AAF49860.1"/>
    <property type="molecule type" value="Genomic_DNA"/>
</dbReference>
<dbReference type="EMBL" id="AE014296">
    <property type="protein sequence ID" value="ACZ94706.1"/>
    <property type="molecule type" value="Genomic_DNA"/>
</dbReference>
<dbReference type="EMBL" id="AY118948">
    <property type="protein sequence ID" value="AAM50808.1"/>
    <property type="molecule type" value="mRNA"/>
</dbReference>
<dbReference type="RefSeq" id="NP_001163435.1">
    <property type="nucleotide sequence ID" value="NM_001169964.2"/>
</dbReference>
<dbReference type="RefSeq" id="NP_648618.1">
    <property type="nucleotide sequence ID" value="NM_140361.2"/>
</dbReference>
<dbReference type="SMR" id="Q9VU31"/>
<dbReference type="FunCoup" id="Q9VU31">
    <property type="interactions" value="7"/>
</dbReference>
<dbReference type="STRING" id="7227.FBpp0075607"/>
<dbReference type="PaxDb" id="7227-FBpp0075607"/>
<dbReference type="DNASU" id="39472"/>
<dbReference type="EnsemblMetazoa" id="FBtr0075873">
    <property type="protein sequence ID" value="FBpp0075607"/>
    <property type="gene ID" value="FBgn0036330"/>
</dbReference>
<dbReference type="EnsemblMetazoa" id="FBtr0300699">
    <property type="protein sequence ID" value="FBpp0289923"/>
    <property type="gene ID" value="FBgn0036330"/>
</dbReference>
<dbReference type="GeneID" id="39472"/>
<dbReference type="KEGG" id="dme:Dmel_CG11263"/>
<dbReference type="UCSC" id="CG11263-RA">
    <property type="organism name" value="d. melanogaster"/>
</dbReference>
<dbReference type="AGR" id="FB:FBgn0036330"/>
<dbReference type="FlyBase" id="FBgn0036330">
    <property type="gene designation" value="CG11263"/>
</dbReference>
<dbReference type="VEuPathDB" id="VectorBase:FBgn0036330"/>
<dbReference type="eggNOG" id="KOG2405">
    <property type="taxonomic scope" value="Eukaryota"/>
</dbReference>
<dbReference type="HOGENOM" id="CLU_987886_0_0_1"/>
<dbReference type="InParanoid" id="Q9VU31"/>
<dbReference type="OMA" id="HYSHRIC"/>
<dbReference type="OrthoDB" id="26838at2759"/>
<dbReference type="PhylomeDB" id="Q9VU31"/>
<dbReference type="BioGRID-ORCS" id="39472">
    <property type="hits" value="0 hits in 1 CRISPR screen"/>
</dbReference>
<dbReference type="GenomeRNAi" id="39472"/>
<dbReference type="PRO" id="PR:Q9VU31"/>
<dbReference type="Proteomes" id="UP000000803">
    <property type="component" value="Chromosome 3L"/>
</dbReference>
<dbReference type="Bgee" id="FBgn0036330">
    <property type="expression patterns" value="Expressed in cleaving embryo and 8 other cell types or tissues"/>
</dbReference>
<dbReference type="GO" id="GO:0043186">
    <property type="term" value="C:P granule"/>
    <property type="evidence" value="ECO:0000250"/>
    <property type="project" value="UniProtKB"/>
</dbReference>
<dbReference type="GO" id="GO:1990923">
    <property type="term" value="C:PET complex"/>
    <property type="evidence" value="ECO:0000318"/>
    <property type="project" value="GO_Central"/>
</dbReference>
<dbReference type="GO" id="GO:0042803">
    <property type="term" value="F:protein homodimerization activity"/>
    <property type="evidence" value="ECO:0000250"/>
    <property type="project" value="UniProtKB"/>
</dbReference>
<dbReference type="GO" id="GO:0003723">
    <property type="term" value="F:RNA binding"/>
    <property type="evidence" value="ECO:0000250"/>
    <property type="project" value="UniProtKB"/>
</dbReference>
<dbReference type="GO" id="GO:0034587">
    <property type="term" value="P:piRNA processing"/>
    <property type="evidence" value="ECO:0000318"/>
    <property type="project" value="GO_Central"/>
</dbReference>
<dbReference type="Gene3D" id="3.30.420.10">
    <property type="entry name" value="Ribonuclease H-like superfamily/Ribonuclease H"/>
    <property type="match status" value="1"/>
</dbReference>
<dbReference type="InterPro" id="IPR052144">
    <property type="entry name" value="piRNA_biogenesis_EXD1"/>
</dbReference>
<dbReference type="InterPro" id="IPR012337">
    <property type="entry name" value="RNaseH-like_sf"/>
</dbReference>
<dbReference type="InterPro" id="IPR036397">
    <property type="entry name" value="RNaseH_sf"/>
</dbReference>
<dbReference type="PANTHER" id="PTHR46628">
    <property type="entry name" value="PIRNA BIOGENESIS PROTEIN EXD1"/>
    <property type="match status" value="1"/>
</dbReference>
<dbReference type="PANTHER" id="PTHR46628:SF1">
    <property type="entry name" value="PIRNA BIOGENESIS PROTEIN EXD1"/>
    <property type="match status" value="1"/>
</dbReference>
<dbReference type="SUPFAM" id="SSF53098">
    <property type="entry name" value="Ribonuclease H-like"/>
    <property type="match status" value="1"/>
</dbReference>
<evidence type="ECO:0000250" key="1">
    <source>
        <dbReference type="UniProtKB" id="H9IUR0"/>
    </source>
</evidence>
<evidence type="ECO:0000250" key="2">
    <source>
        <dbReference type="UniProtKB" id="Q8NHP7"/>
    </source>
</evidence>
<evidence type="ECO:0000255" key="3"/>
<evidence type="ECO:0000269" key="4">
    <source>
    </source>
</evidence>
<evidence type="ECO:0000303" key="5">
    <source>
    </source>
</evidence>
<evidence type="ECO:0000305" key="6"/>
<evidence type="ECO:0000305" key="7">
    <source>
    </source>
</evidence>
<evidence type="ECO:0000312" key="8">
    <source>
        <dbReference type="FlyBase" id="FBgn0036330"/>
    </source>
</evidence>
<protein>
    <recommendedName>
        <fullName evidence="6">Protein Exd1 homolog</fullName>
        <shortName evidence="5">DmExd1</shortName>
    </recommendedName>
    <alternativeName>
        <fullName evidence="2">Exonuclease 3'-5' domain-containing protein 1 homolog</fullName>
    </alternativeName>
    <alternativeName>
        <fullName evidence="2">Exonuclease 3'-5' domain-like-containing protein 1 homolog</fullName>
    </alternativeName>
</protein>
<gene>
    <name evidence="8" type="ORF">CG11263</name>
</gene>